<reference key="1">
    <citation type="journal article" date="2006" name="PLoS Genet.">
        <title>Genome sequence of Rickettsia bellii illuminates the role of amoebae in gene exchanges between intracellular pathogens.</title>
        <authorList>
            <person name="Ogata H."/>
            <person name="La Scola B."/>
            <person name="Audic S."/>
            <person name="Renesto P."/>
            <person name="Blanc G."/>
            <person name="Robert C."/>
            <person name="Fournier P.-E."/>
            <person name="Claverie J.-M."/>
            <person name="Raoult D."/>
        </authorList>
    </citation>
    <scope>NUCLEOTIDE SEQUENCE [LARGE SCALE GENOMIC DNA]</scope>
    <source>
        <strain>RML369-C</strain>
    </source>
</reference>
<evidence type="ECO:0000255" key="1">
    <source>
        <dbReference type="HAMAP-Rule" id="MF_00057"/>
    </source>
</evidence>
<accession>Q1RHU5</accession>
<feature type="chain" id="PRO_0000274833" description="3-deoxy-manno-octulosonate cytidylyltransferase">
    <location>
        <begin position="1"/>
        <end position="244"/>
    </location>
</feature>
<name>KDSB_RICBR</name>
<keyword id="KW-0963">Cytoplasm</keyword>
<keyword id="KW-0448">Lipopolysaccharide biosynthesis</keyword>
<keyword id="KW-0548">Nucleotidyltransferase</keyword>
<keyword id="KW-0808">Transferase</keyword>
<proteinExistence type="inferred from homology"/>
<gene>
    <name evidence="1" type="primary">kdsB</name>
    <name type="ordered locus">RBE_0988</name>
</gene>
<protein>
    <recommendedName>
        <fullName evidence="1">3-deoxy-manno-octulosonate cytidylyltransferase</fullName>
        <ecNumber evidence="1">2.7.7.38</ecNumber>
    </recommendedName>
    <alternativeName>
        <fullName evidence="1">CMP-2-keto-3-deoxyoctulosonic acid synthase</fullName>
        <shortName evidence="1">CKS</shortName>
        <shortName evidence="1">CMP-KDO synthase</shortName>
    </alternativeName>
</protein>
<dbReference type="EC" id="2.7.7.38" evidence="1"/>
<dbReference type="EMBL" id="CP000087">
    <property type="protein sequence ID" value="ABE05069.1"/>
    <property type="molecule type" value="Genomic_DNA"/>
</dbReference>
<dbReference type="RefSeq" id="WP_011477649.1">
    <property type="nucleotide sequence ID" value="NC_007940.1"/>
</dbReference>
<dbReference type="SMR" id="Q1RHU5"/>
<dbReference type="KEGG" id="rbe:RBE_0988"/>
<dbReference type="eggNOG" id="COG1212">
    <property type="taxonomic scope" value="Bacteria"/>
</dbReference>
<dbReference type="HOGENOM" id="CLU_065038_0_1_5"/>
<dbReference type="OrthoDB" id="9815559at2"/>
<dbReference type="UniPathway" id="UPA00030"/>
<dbReference type="UniPathway" id="UPA00358">
    <property type="reaction ID" value="UER00476"/>
</dbReference>
<dbReference type="Proteomes" id="UP000001951">
    <property type="component" value="Chromosome"/>
</dbReference>
<dbReference type="GO" id="GO:0005829">
    <property type="term" value="C:cytosol"/>
    <property type="evidence" value="ECO:0007669"/>
    <property type="project" value="TreeGrafter"/>
</dbReference>
<dbReference type="GO" id="GO:0008690">
    <property type="term" value="F:3-deoxy-manno-octulosonate cytidylyltransferase activity"/>
    <property type="evidence" value="ECO:0007669"/>
    <property type="project" value="UniProtKB-UniRule"/>
</dbReference>
<dbReference type="GO" id="GO:0033468">
    <property type="term" value="P:CMP-keto-3-deoxy-D-manno-octulosonic acid biosynthetic process"/>
    <property type="evidence" value="ECO:0007669"/>
    <property type="project" value="UniProtKB-UniRule"/>
</dbReference>
<dbReference type="GO" id="GO:0009103">
    <property type="term" value="P:lipopolysaccharide biosynthetic process"/>
    <property type="evidence" value="ECO:0007669"/>
    <property type="project" value="UniProtKB-UniRule"/>
</dbReference>
<dbReference type="CDD" id="cd02517">
    <property type="entry name" value="CMP-KDO-Synthetase"/>
    <property type="match status" value="1"/>
</dbReference>
<dbReference type="Gene3D" id="3.90.550.10">
    <property type="entry name" value="Spore Coat Polysaccharide Biosynthesis Protein SpsA, Chain A"/>
    <property type="match status" value="1"/>
</dbReference>
<dbReference type="HAMAP" id="MF_00057">
    <property type="entry name" value="KdsB"/>
    <property type="match status" value="1"/>
</dbReference>
<dbReference type="InterPro" id="IPR003329">
    <property type="entry name" value="Cytidylyl_trans"/>
</dbReference>
<dbReference type="InterPro" id="IPR004528">
    <property type="entry name" value="KdsB"/>
</dbReference>
<dbReference type="InterPro" id="IPR029044">
    <property type="entry name" value="Nucleotide-diphossugar_trans"/>
</dbReference>
<dbReference type="NCBIfam" id="TIGR00466">
    <property type="entry name" value="kdsB"/>
    <property type="match status" value="1"/>
</dbReference>
<dbReference type="NCBIfam" id="NF003948">
    <property type="entry name" value="PRK05450.1-1"/>
    <property type="match status" value="1"/>
</dbReference>
<dbReference type="NCBIfam" id="NF003952">
    <property type="entry name" value="PRK05450.1-5"/>
    <property type="match status" value="1"/>
</dbReference>
<dbReference type="PANTHER" id="PTHR42866">
    <property type="entry name" value="3-DEOXY-MANNO-OCTULOSONATE CYTIDYLYLTRANSFERASE"/>
    <property type="match status" value="1"/>
</dbReference>
<dbReference type="PANTHER" id="PTHR42866:SF2">
    <property type="entry name" value="3-DEOXY-MANNO-OCTULOSONATE CYTIDYLYLTRANSFERASE, MITOCHONDRIAL"/>
    <property type="match status" value="1"/>
</dbReference>
<dbReference type="Pfam" id="PF02348">
    <property type="entry name" value="CTP_transf_3"/>
    <property type="match status" value="1"/>
</dbReference>
<dbReference type="SUPFAM" id="SSF53448">
    <property type="entry name" value="Nucleotide-diphospho-sugar transferases"/>
    <property type="match status" value="1"/>
</dbReference>
<sequence length="244" mass="27383">MKHQDVAIIIPSRLSSTRLTRKPLQLIGSSTLIERVFKQVNQTNLEHIYVATDSQEIASVIEKLGGKVIFTDSNIPTGTDRTYEAFKLIPNNQNINYIVNVQGDMPFIEPESILKVIEDLKNSKYDIVTPVVKVEKDSVEAASNVTVAIDSKGKAIYFSRSLIPNGAEEFLYHVGMYGFRKSALERFVALEPTFLEKTERLEQLRLLENGMTIGTCLVNNVPISVDTPEDLSKAVKFYEKSKLV</sequence>
<organism>
    <name type="scientific">Rickettsia bellii (strain RML369-C)</name>
    <dbReference type="NCBI Taxonomy" id="336407"/>
    <lineage>
        <taxon>Bacteria</taxon>
        <taxon>Pseudomonadati</taxon>
        <taxon>Pseudomonadota</taxon>
        <taxon>Alphaproteobacteria</taxon>
        <taxon>Rickettsiales</taxon>
        <taxon>Rickettsiaceae</taxon>
        <taxon>Rickettsieae</taxon>
        <taxon>Rickettsia</taxon>
        <taxon>belli group</taxon>
    </lineage>
</organism>
<comment type="function">
    <text evidence="1">Activates KDO (a required 8-carbon sugar) for incorporation into bacterial lipopolysaccharide in Gram-negative bacteria.</text>
</comment>
<comment type="catalytic activity">
    <reaction evidence="1">
        <text>3-deoxy-alpha-D-manno-oct-2-ulosonate + CTP = CMP-3-deoxy-beta-D-manno-octulosonate + diphosphate</text>
        <dbReference type="Rhea" id="RHEA:23448"/>
        <dbReference type="ChEBI" id="CHEBI:33019"/>
        <dbReference type="ChEBI" id="CHEBI:37563"/>
        <dbReference type="ChEBI" id="CHEBI:85986"/>
        <dbReference type="ChEBI" id="CHEBI:85987"/>
        <dbReference type="EC" id="2.7.7.38"/>
    </reaction>
</comment>
<comment type="pathway">
    <text evidence="1">Nucleotide-sugar biosynthesis; CMP-3-deoxy-D-manno-octulosonate biosynthesis; CMP-3-deoxy-D-manno-octulosonate from 3-deoxy-D-manno-octulosonate and CTP: step 1/1.</text>
</comment>
<comment type="pathway">
    <text evidence="1">Bacterial outer membrane biogenesis; lipopolysaccharide biosynthesis.</text>
</comment>
<comment type="subcellular location">
    <subcellularLocation>
        <location evidence="1">Cytoplasm</location>
    </subcellularLocation>
</comment>
<comment type="similarity">
    <text evidence="1">Belongs to the KdsB family.</text>
</comment>